<name>PZNO1_LYSAN</name>
<protein>
    <recommendedName>
        <fullName evidence="6">Phenazine N-monooxygenase PhzNO1</fullName>
        <ecNumber evidence="2 3">1.14.-.-</ecNumber>
    </recommendedName>
    <alternativeName>
        <fullName evidence="5">Baeyer-Villiger-like flavin enzyme</fullName>
    </alternativeName>
    <alternativeName>
        <fullName evidence="7">Cyclohexanone monooxygenase</fullName>
    </alternativeName>
    <alternativeName>
        <fullName evidence="4">NADPH-dependent flavin-containing N-monooxygenase</fullName>
    </alternativeName>
</protein>
<comment type="function">
    <text evidence="2 3">Involved in the biosynthesis of phenazine natural products including myxin, an N(5),N(10)-dioxide phenazine antiobiotic, which has antimicrobial activity. Catalyzes the aromatic N-oxidations of phenazines, such as 1,6-dihydroxyphenazine (DHP), 1,6-dihydroxyphenazine N(5)-oxide (DHPO) and 1-hydroxy-6-methoxyphenazine to produce DHPO, iodinin (1,6-dihydroxyphenazine N(5),N(10)-dioxide) and 1-hydroxy-6-methoxyphenazine N(10)-oxide, respectively (PubMed:27145204, PubMed:29510028). Also catalyzes the N-oxidation of 8-hydroxyquinoline, but not 6-hydroxyquinoline (6-HQ), quinoline, quinoxaline, quinine and 2-phenylpyridine (PubMed:27145204).</text>
</comment>
<comment type="catalytic activity">
    <reaction evidence="3">
        <text>1,6-dihydroxyphenazine + NADPH + O2 = 1,6-dihydroxyphenazine N(5)-oxide + NADP(+) + H2O</text>
        <dbReference type="Rhea" id="RHEA:72647"/>
        <dbReference type="ChEBI" id="CHEBI:15377"/>
        <dbReference type="ChEBI" id="CHEBI:15379"/>
        <dbReference type="ChEBI" id="CHEBI:57783"/>
        <dbReference type="ChEBI" id="CHEBI:58349"/>
        <dbReference type="ChEBI" id="CHEBI:192365"/>
        <dbReference type="ChEBI" id="CHEBI:192371"/>
    </reaction>
    <physiologicalReaction direction="left-to-right" evidence="3">
        <dbReference type="Rhea" id="RHEA:72648"/>
    </physiologicalReaction>
</comment>
<comment type="catalytic activity">
    <reaction evidence="3">
        <text>1,6-dihydroxyphenazine N(5)-oxide + NADPH + O2 = 1,6-dihydroxyphenazine N(5),N(10)-dioxide + NADP(+) + H2O</text>
        <dbReference type="Rhea" id="RHEA:72651"/>
        <dbReference type="ChEBI" id="CHEBI:15377"/>
        <dbReference type="ChEBI" id="CHEBI:15379"/>
        <dbReference type="ChEBI" id="CHEBI:57783"/>
        <dbReference type="ChEBI" id="CHEBI:58349"/>
        <dbReference type="ChEBI" id="CHEBI:192371"/>
        <dbReference type="ChEBI" id="CHEBI:192372"/>
    </reaction>
    <physiologicalReaction direction="left-to-right" evidence="3">
        <dbReference type="Rhea" id="RHEA:72652"/>
    </physiologicalReaction>
</comment>
<comment type="catalytic activity">
    <reaction evidence="2">
        <text>1-hydroxy-6-methoxyphenazine + NADPH + O2 = 1-hydroxy-6-methoxyphenazine N(10)-oxide + NADP(+) + H2O</text>
        <dbReference type="Rhea" id="RHEA:72655"/>
        <dbReference type="ChEBI" id="CHEBI:15377"/>
        <dbReference type="ChEBI" id="CHEBI:15379"/>
        <dbReference type="ChEBI" id="CHEBI:57783"/>
        <dbReference type="ChEBI" id="CHEBI:58349"/>
        <dbReference type="ChEBI" id="CHEBI:192366"/>
        <dbReference type="ChEBI" id="CHEBI:192368"/>
    </reaction>
    <physiologicalReaction direction="left-to-right" evidence="2">
        <dbReference type="Rhea" id="RHEA:72656"/>
    </physiologicalReaction>
</comment>
<comment type="catalytic activity">
    <reaction evidence="2">
        <text>quinolin-8-ol + NADPH + O2 = 8-hydroxyquinoline N-oxide + NADP(+) + H2O</text>
        <dbReference type="Rhea" id="RHEA:72659"/>
        <dbReference type="ChEBI" id="CHEBI:15377"/>
        <dbReference type="ChEBI" id="CHEBI:15379"/>
        <dbReference type="ChEBI" id="CHEBI:48981"/>
        <dbReference type="ChEBI" id="CHEBI:57783"/>
        <dbReference type="ChEBI" id="CHEBI:58349"/>
        <dbReference type="ChEBI" id="CHEBI:192492"/>
    </reaction>
    <physiologicalReaction direction="left-to-right" evidence="2">
        <dbReference type="Rhea" id="RHEA:72660"/>
    </physiologicalReaction>
</comment>
<comment type="cofactor">
    <cofactor evidence="2">
        <name>FAD</name>
        <dbReference type="ChEBI" id="CHEBI:57692"/>
    </cofactor>
</comment>
<comment type="disruption phenotype">
    <text evidence="2">Disappearance of all phenazine N-oxide products with significantly increased phenazine non-oxides. Exhibits some antibacterial activity toward E.coli and B.subtilis, but at a much lower level than the wild type.</text>
</comment>
<comment type="similarity">
    <text evidence="6">Belongs to the FAD-binding monooxygenase family.</text>
</comment>
<keyword id="KW-0274">FAD</keyword>
<keyword id="KW-0285">Flavoprotein</keyword>
<keyword id="KW-0503">Monooxygenase</keyword>
<keyword id="KW-0521">NADP</keyword>
<keyword id="KW-0560">Oxidoreductase</keyword>
<evidence type="ECO:0000250" key="1">
    <source>
        <dbReference type="UniProtKB" id="H3JQW0"/>
    </source>
</evidence>
<evidence type="ECO:0000269" key="2">
    <source>
    </source>
</evidence>
<evidence type="ECO:0000269" key="3">
    <source>
    </source>
</evidence>
<evidence type="ECO:0000303" key="4">
    <source>
    </source>
</evidence>
<evidence type="ECO:0000303" key="5">
    <source>
    </source>
</evidence>
<evidence type="ECO:0000305" key="6"/>
<evidence type="ECO:0000312" key="7">
    <source>
        <dbReference type="EMBL" id="AMQ09357.1"/>
    </source>
</evidence>
<reference evidence="7" key="1">
    <citation type="journal article" date="2016" name="Org. Lett.">
        <title>Heterocyclic Aromatic N-Oxidation in the Biosynthesis of Phenazine Antibiotics from Lysobacter antibioticus.</title>
        <authorList>
            <person name="Zhao Y."/>
            <person name="Qian G."/>
            <person name="Ye Y."/>
            <person name="Wright S."/>
            <person name="Chen H."/>
            <person name="Shen Y."/>
            <person name="Liu F."/>
            <person name="Du L."/>
        </authorList>
    </citation>
    <scope>NUCLEOTIDE SEQUENCE [GENOMIC DNA]</scope>
    <scope>FUNCTION</scope>
    <scope>CATALYTIC ACTIVITY</scope>
    <scope>COFACTOR</scope>
    <scope>SUBSTRATE SPECIFICITY</scope>
    <scope>REACTION MECHANISM</scope>
    <scope>DISRUPTION PHENOTYPE</scope>
    <source>
        <strain evidence="7">OH13</strain>
    </source>
</reference>
<reference key="2">
    <citation type="journal article" date="2018" name="ACS Chem. Biol.">
        <title>Functional and Structural Analysis of Phenazine O-Methyltransferase LaPhzM from Lysobacter antibioticus OH13 and One-Pot Enzymatic Synthesis of the Antibiotic Myxin.</title>
        <authorList>
            <person name="Jiang J."/>
            <person name="Guiza Beltran D."/>
            <person name="Schacht A."/>
            <person name="Wright S."/>
            <person name="Zhang L."/>
            <person name="Du L."/>
        </authorList>
    </citation>
    <scope>FUNCTION</scope>
    <scope>CATALYTIC ACTIVITY</scope>
    <source>
        <strain evidence="5">OH13</strain>
    </source>
</reference>
<feature type="chain" id="PRO_0000456639" description="Phenazine N-monooxygenase PhzNO1">
    <location>
        <begin position="1"/>
        <end position="541"/>
    </location>
</feature>
<feature type="binding site" evidence="1">
    <location>
        <position position="39"/>
    </location>
    <ligand>
        <name>FAD</name>
        <dbReference type="ChEBI" id="CHEBI:57692"/>
    </ligand>
</feature>
<feature type="binding site" evidence="1">
    <location>
        <begin position="47"/>
        <end position="50"/>
    </location>
    <ligand>
        <name>FAD</name>
        <dbReference type="ChEBI" id="CHEBI:57692"/>
    </ligand>
</feature>
<feature type="binding site" evidence="1">
    <location>
        <begin position="57"/>
        <end position="59"/>
    </location>
    <ligand>
        <name>NADP(+)</name>
        <dbReference type="ChEBI" id="CHEBI:58349"/>
    </ligand>
</feature>
<feature type="binding site" evidence="1">
    <location>
        <begin position="59"/>
        <end position="60"/>
    </location>
    <ligand>
        <name>FAD</name>
        <dbReference type="ChEBI" id="CHEBI:57692"/>
    </ligand>
</feature>
<feature type="binding site" evidence="1">
    <location>
        <position position="65"/>
    </location>
    <ligand>
        <name>FAD</name>
        <dbReference type="ChEBI" id="CHEBI:57692"/>
    </ligand>
</feature>
<feature type="binding site" evidence="1">
    <location>
        <position position="112"/>
    </location>
    <ligand>
        <name>FAD</name>
        <dbReference type="ChEBI" id="CHEBI:57692"/>
    </ligand>
</feature>
<feature type="binding site" evidence="1">
    <location>
        <begin position="186"/>
        <end position="192"/>
    </location>
    <ligand>
        <name>NADP(+)</name>
        <dbReference type="ChEBI" id="CHEBI:58349"/>
    </ligand>
</feature>
<feature type="binding site" evidence="1">
    <location>
        <begin position="209"/>
        <end position="210"/>
    </location>
    <ligand>
        <name>NADP(+)</name>
        <dbReference type="ChEBI" id="CHEBI:58349"/>
    </ligand>
</feature>
<feature type="binding site" evidence="1">
    <location>
        <position position="492"/>
    </location>
    <ligand>
        <name>NADP(+)</name>
        <dbReference type="ChEBI" id="CHEBI:58349"/>
    </ligand>
</feature>
<feature type="site" description="Transition state stabilizer" evidence="1">
    <location>
        <position position="329"/>
    </location>
</feature>
<dbReference type="EC" id="1.14.-.-" evidence="2 3"/>
<dbReference type="EMBL" id="KU900196">
    <property type="protein sequence ID" value="AMQ09357.1"/>
    <property type="molecule type" value="Genomic_DNA"/>
</dbReference>
<dbReference type="SMR" id="A0A172J1R7"/>
<dbReference type="GO" id="GO:0018667">
    <property type="term" value="F:cyclohexanone monooxygenase activity"/>
    <property type="evidence" value="ECO:0000314"/>
    <property type="project" value="UniProtKB"/>
</dbReference>
<dbReference type="GO" id="GO:0071949">
    <property type="term" value="F:FAD binding"/>
    <property type="evidence" value="ECO:0000250"/>
    <property type="project" value="UniProtKB"/>
</dbReference>
<dbReference type="GO" id="GO:0050661">
    <property type="term" value="F:NADP binding"/>
    <property type="evidence" value="ECO:0000250"/>
    <property type="project" value="UniProtKB"/>
</dbReference>
<dbReference type="GO" id="GO:0042742">
    <property type="term" value="P:defense response to bacterium"/>
    <property type="evidence" value="ECO:0000315"/>
    <property type="project" value="UniProtKB"/>
</dbReference>
<dbReference type="GO" id="GO:0002047">
    <property type="term" value="P:phenazine biosynthetic process"/>
    <property type="evidence" value="ECO:0000314"/>
    <property type="project" value="UniProtKB"/>
</dbReference>
<dbReference type="Gene3D" id="3.50.50.60">
    <property type="entry name" value="FAD/NAD(P)-binding domain"/>
    <property type="match status" value="2"/>
</dbReference>
<dbReference type="InterPro" id="IPR050775">
    <property type="entry name" value="FAD-binding_Monooxygenases"/>
</dbReference>
<dbReference type="InterPro" id="IPR036188">
    <property type="entry name" value="FAD/NAD-bd_sf"/>
</dbReference>
<dbReference type="InterPro" id="IPR023753">
    <property type="entry name" value="FAD/NAD-binding_dom"/>
</dbReference>
<dbReference type="PANTHER" id="PTHR43098:SF5">
    <property type="entry name" value="DUAL-FUNCTIONAL MONOOXYGENASE_METHYLTRANSFERASE PSOF"/>
    <property type="match status" value="1"/>
</dbReference>
<dbReference type="PANTHER" id="PTHR43098">
    <property type="entry name" value="L-ORNITHINE N(5)-MONOOXYGENASE-RELATED"/>
    <property type="match status" value="1"/>
</dbReference>
<dbReference type="Pfam" id="PF07992">
    <property type="entry name" value="Pyr_redox_2"/>
    <property type="match status" value="1"/>
</dbReference>
<dbReference type="SUPFAM" id="SSF51905">
    <property type="entry name" value="FAD/NAD(P)-binding domain"/>
    <property type="match status" value="2"/>
</dbReference>
<accession>A0A172J1R7</accession>
<organism>
    <name type="scientific">Lysobacter antibioticus</name>
    <dbReference type="NCBI Taxonomy" id="84531"/>
    <lineage>
        <taxon>Bacteria</taxon>
        <taxon>Pseudomonadati</taxon>
        <taxon>Pseudomonadota</taxon>
        <taxon>Gammaproteobacteria</taxon>
        <taxon>Lysobacterales</taxon>
        <taxon>Lysobacteraceae</taxon>
        <taxon>Lysobacter</taxon>
    </lineage>
</organism>
<sequence>MIDNDKTHFDAIVIGTGFAGIYMLHKLRNELGLKVRAFDKASGVGGTWYWNKYPGARADTESFVYRYSFDKETSEGWDWRNRYVDQPEMLGYLQAVVDRHGLAKDIQLKTGIDSAVFDEIHHIWTLTTSTGELFTARYLVNAVGVLSKIVIPQIPGRDKFQGQIVHTGAWPADLSLEGKRVGVIGTGSTGVQFICAASKLARHLTVFQRSAQFCVPAGSRQVSEAYVAEYKNNFEQIWDGIRNSRIACGFEESGVSAMSVSEEERQKVFEHHWEIGNGFRFMFGTFSDIAVDPAANQAASDFIRAKIRQIVKDPETARKLCPTDLYAKRPVCTNDYYETYNLPNVSLVSLPENPIKELTANGVLTEDGVEHKLDLLVFATGFETVEGSYNQMEIRGRGGETLQHHWKDAPSSYLGVATAGFPNMFMVLGPNSAFSNLPPSIESQVEWIGELIGWAEGESTPVIETTREAEEAWTATCKEIAAYTLFPKVKSWIFGENIDGRSSRVLFYFGGLAGYRAKLREVADADYEGFILHSDPSSMVA</sequence>
<gene>
    <name evidence="4 5 7" type="primary">phzNO1</name>
</gene>
<proteinExistence type="evidence at protein level"/>